<dbReference type="EC" id="2.4.1.-"/>
<dbReference type="EMBL" id="AC002505">
    <property type="protein sequence ID" value="AAC14497.1"/>
    <property type="molecule type" value="Genomic_DNA"/>
</dbReference>
<dbReference type="EMBL" id="CP002685">
    <property type="protein sequence ID" value="AEC07843.1"/>
    <property type="molecule type" value="Genomic_DNA"/>
</dbReference>
<dbReference type="EMBL" id="BX821030">
    <property type="status" value="NOT_ANNOTATED_CDS"/>
    <property type="molecule type" value="mRNA"/>
</dbReference>
<dbReference type="PIR" id="T00981">
    <property type="entry name" value="T00981"/>
</dbReference>
<dbReference type="RefSeq" id="NP_180216.1">
    <property type="nucleotide sequence ID" value="NM_128205.3"/>
</dbReference>
<dbReference type="SMR" id="O48715"/>
<dbReference type="FunCoup" id="O48715">
    <property type="interactions" value="158"/>
</dbReference>
<dbReference type="STRING" id="3702.O48715"/>
<dbReference type="CAZy" id="GT1">
    <property type="family name" value="Glycosyltransferase Family 1"/>
</dbReference>
<dbReference type="PaxDb" id="3702-AT2G26480.1"/>
<dbReference type="ProteomicsDB" id="243208"/>
<dbReference type="EnsemblPlants" id="AT2G26480.1">
    <property type="protein sequence ID" value="AT2G26480.1"/>
    <property type="gene ID" value="AT2G26480"/>
</dbReference>
<dbReference type="GeneID" id="817189"/>
<dbReference type="Gramene" id="AT2G26480.1">
    <property type="protein sequence ID" value="AT2G26480.1"/>
    <property type="gene ID" value="AT2G26480"/>
</dbReference>
<dbReference type="KEGG" id="ath:AT2G26480"/>
<dbReference type="Araport" id="AT2G26480"/>
<dbReference type="TAIR" id="AT2G26480">
    <property type="gene designation" value="UGT76D1"/>
</dbReference>
<dbReference type="eggNOG" id="KOG1192">
    <property type="taxonomic scope" value="Eukaryota"/>
</dbReference>
<dbReference type="HOGENOM" id="CLU_001724_0_0_1"/>
<dbReference type="InParanoid" id="O48715"/>
<dbReference type="OMA" id="TSISRCV"/>
<dbReference type="OrthoDB" id="5835829at2759"/>
<dbReference type="PhylomeDB" id="O48715"/>
<dbReference type="BioCyc" id="ARA:AT2G26480-MONOMER"/>
<dbReference type="PRO" id="PR:O48715"/>
<dbReference type="Proteomes" id="UP000006548">
    <property type="component" value="Chromosome 2"/>
</dbReference>
<dbReference type="ExpressionAtlas" id="O48715">
    <property type="expression patterns" value="baseline and differential"/>
</dbReference>
<dbReference type="GO" id="GO:0080044">
    <property type="term" value="F:quercetin 7-O-glucosyltransferase activity"/>
    <property type="evidence" value="ECO:0000314"/>
    <property type="project" value="TAIR"/>
</dbReference>
<dbReference type="CDD" id="cd03784">
    <property type="entry name" value="GT1_Gtf-like"/>
    <property type="match status" value="1"/>
</dbReference>
<dbReference type="FunFam" id="3.40.50.2000:FF:000040">
    <property type="entry name" value="UDP-glycosyltransferase 76C1"/>
    <property type="match status" value="1"/>
</dbReference>
<dbReference type="Gene3D" id="3.40.50.2000">
    <property type="entry name" value="Glycogen Phosphorylase B"/>
    <property type="match status" value="2"/>
</dbReference>
<dbReference type="InterPro" id="IPR002213">
    <property type="entry name" value="UDP_glucos_trans"/>
</dbReference>
<dbReference type="PANTHER" id="PTHR11926">
    <property type="entry name" value="GLUCOSYL/GLUCURONOSYL TRANSFERASES"/>
    <property type="match status" value="1"/>
</dbReference>
<dbReference type="PANTHER" id="PTHR11926:SF1244">
    <property type="entry name" value="UDP-GLYCOSYLTRANSFERASE 76D1"/>
    <property type="match status" value="1"/>
</dbReference>
<dbReference type="Pfam" id="PF00201">
    <property type="entry name" value="UDPGT"/>
    <property type="match status" value="1"/>
</dbReference>
<dbReference type="SUPFAM" id="SSF53756">
    <property type="entry name" value="UDP-Glycosyltransferase/glycogen phosphorylase"/>
    <property type="match status" value="1"/>
</dbReference>
<proteinExistence type="evidence at transcript level"/>
<evidence type="ECO:0000250" key="1"/>
<evidence type="ECO:0000269" key="2">
    <source>
    </source>
</evidence>
<evidence type="ECO:0000305" key="3"/>
<gene>
    <name type="primary">UGT76D1</name>
    <name type="ordered locus">At2g26480</name>
    <name type="ORF">T9J22.15</name>
</gene>
<accession>O48715</accession>
<organism>
    <name type="scientific">Arabidopsis thaliana</name>
    <name type="common">Mouse-ear cress</name>
    <dbReference type="NCBI Taxonomy" id="3702"/>
    <lineage>
        <taxon>Eukaryota</taxon>
        <taxon>Viridiplantae</taxon>
        <taxon>Streptophyta</taxon>
        <taxon>Embryophyta</taxon>
        <taxon>Tracheophyta</taxon>
        <taxon>Spermatophyta</taxon>
        <taxon>Magnoliopsida</taxon>
        <taxon>eudicotyledons</taxon>
        <taxon>Gunneridae</taxon>
        <taxon>Pentapetalae</taxon>
        <taxon>rosids</taxon>
        <taxon>malvids</taxon>
        <taxon>Brassicales</taxon>
        <taxon>Brassicaceae</taxon>
        <taxon>Camelineae</taxon>
        <taxon>Arabidopsis</taxon>
    </lineage>
</organism>
<name>U76D1_ARATH</name>
<feature type="chain" id="PRO_0000409085" description="UDP-glycosyltransferase 76D1">
    <location>
        <begin position="1"/>
        <end position="452"/>
    </location>
</feature>
<feature type="binding site" evidence="1">
    <location>
        <position position="269"/>
    </location>
    <ligand>
        <name>UDP-alpha-D-glucose</name>
        <dbReference type="ChEBI" id="CHEBI:58885"/>
    </ligand>
</feature>
<feature type="binding site" evidence="1">
    <location>
        <begin position="329"/>
        <end position="331"/>
    </location>
    <ligand>
        <name>UDP-alpha-D-glucose</name>
        <dbReference type="ChEBI" id="CHEBI:58885"/>
    </ligand>
</feature>
<feature type="binding site" evidence="1">
    <location>
        <begin position="346"/>
        <end position="354"/>
    </location>
    <ligand>
        <name>UDP-alpha-D-glucose</name>
        <dbReference type="ChEBI" id="CHEBI:58885"/>
    </ligand>
</feature>
<feature type="binding site" evidence="1">
    <location>
        <begin position="368"/>
        <end position="371"/>
    </location>
    <ligand>
        <name>UDP-alpha-D-glucose</name>
        <dbReference type="ChEBI" id="CHEBI:58885"/>
    </ligand>
</feature>
<sequence>MAEIRQRRVLMVPAPFQGHLPSMMNLASYLSSQGFSITIVRNEFNFKDISHNFPGIKFFTIKDGLSESDVKSLGLLEFVLELNSVCEPLLKEFLTNHDDVVDFIIYDEFVYFPRRVAEDMNLPKMVFSPSSAATSISRCVLMENQSNGLLPPQDARSQLEETVPEFHPFRFKDLPFTAYGSMERLMILYENVSNRASSSGIIHNSSDCLENSFITTAQEKWGVPVYPVGPLHMTNSAMSCPSLFEEERNCLEWLEKQETSSVIYISMGSLAMTQDIEAVEMAMGFVQSNQPFLWVIRPGSINGQESLDFLPEQFNQTVTDGRGFVVKWAPQKEVLRHRAVGGFWNHGGWNSCLESISSGVPMICRPYSGDQRVNTRLMSHVWQTAYEIEGELERGAVEMAVRRLIVDQEGQEMRMRATILKEEVEASVTTEGSSHNSLNNLVHAIMMQIDEQ</sequence>
<reference key="1">
    <citation type="journal article" date="1999" name="Nature">
        <title>Sequence and analysis of chromosome 2 of the plant Arabidopsis thaliana.</title>
        <authorList>
            <person name="Lin X."/>
            <person name="Kaul S."/>
            <person name="Rounsley S.D."/>
            <person name="Shea T.P."/>
            <person name="Benito M.-I."/>
            <person name="Town C.D."/>
            <person name="Fujii C.Y."/>
            <person name="Mason T.M."/>
            <person name="Bowman C.L."/>
            <person name="Barnstead M.E."/>
            <person name="Feldblyum T.V."/>
            <person name="Buell C.R."/>
            <person name="Ketchum K.A."/>
            <person name="Lee J.J."/>
            <person name="Ronning C.M."/>
            <person name="Koo H.L."/>
            <person name="Moffat K.S."/>
            <person name="Cronin L.A."/>
            <person name="Shen M."/>
            <person name="Pai G."/>
            <person name="Van Aken S."/>
            <person name="Umayam L."/>
            <person name="Tallon L.J."/>
            <person name="Gill J.E."/>
            <person name="Adams M.D."/>
            <person name="Carrera A.J."/>
            <person name="Creasy T.H."/>
            <person name="Goodman H.M."/>
            <person name="Somerville C.R."/>
            <person name="Copenhaver G.P."/>
            <person name="Preuss D."/>
            <person name="Nierman W.C."/>
            <person name="White O."/>
            <person name="Eisen J.A."/>
            <person name="Salzberg S.L."/>
            <person name="Fraser C.M."/>
            <person name="Venter J.C."/>
        </authorList>
    </citation>
    <scope>NUCLEOTIDE SEQUENCE [LARGE SCALE GENOMIC DNA]</scope>
    <source>
        <strain>cv. Columbia</strain>
    </source>
</reference>
<reference key="2">
    <citation type="journal article" date="2017" name="Plant J.">
        <title>Araport11: a complete reannotation of the Arabidopsis thaliana reference genome.</title>
        <authorList>
            <person name="Cheng C.Y."/>
            <person name="Krishnakumar V."/>
            <person name="Chan A.P."/>
            <person name="Thibaud-Nissen F."/>
            <person name="Schobel S."/>
            <person name="Town C.D."/>
        </authorList>
    </citation>
    <scope>GENOME REANNOTATION</scope>
    <source>
        <strain>cv. Columbia</strain>
    </source>
</reference>
<reference key="3">
    <citation type="journal article" date="2004" name="Genome Res.">
        <title>Whole genome sequence comparisons and 'full-length' cDNA sequences: a combined approach to evaluate and improve Arabidopsis genome annotation.</title>
        <authorList>
            <person name="Castelli V."/>
            <person name="Aury J.-M."/>
            <person name="Jaillon O."/>
            <person name="Wincker P."/>
            <person name="Clepet C."/>
            <person name="Menard M."/>
            <person name="Cruaud C."/>
            <person name="Quetier F."/>
            <person name="Scarpelli C."/>
            <person name="Schaechter V."/>
            <person name="Temple G."/>
            <person name="Caboche M."/>
            <person name="Weissenbach J."/>
            <person name="Salanoubat M."/>
        </authorList>
    </citation>
    <scope>NUCLEOTIDE SEQUENCE [LARGE SCALE MRNA] OF 5-452</scope>
    <source>
        <strain>cv. Columbia</strain>
    </source>
</reference>
<reference key="4">
    <citation type="journal article" date="2001" name="J. Biol. Chem.">
        <title>Phylogenetic analysis of the UDP-glycosyltransferase multigene family of Arabidopsis thaliana.</title>
        <authorList>
            <person name="Li Y."/>
            <person name="Baldauf S."/>
            <person name="Lim E.K."/>
            <person name="Bowles D.J."/>
        </authorList>
    </citation>
    <scope>GENE FAMILY</scope>
</reference>
<reference key="5">
    <citation type="journal article" date="2004" name="Biotechnol. Bioeng.">
        <title>Arabidopsis glycosyltransferases as biocatalysts in fermentation for regioselective synthesis of diverse quercetin glucosides.</title>
        <authorList>
            <person name="Lim E.K."/>
            <person name="Ashford D.A."/>
            <person name="Hou B."/>
            <person name="Jackson R.G."/>
            <person name="Bowles D.J."/>
        </authorList>
    </citation>
    <scope>FUNCTION</scope>
</reference>
<keyword id="KW-0328">Glycosyltransferase</keyword>
<keyword id="KW-1185">Reference proteome</keyword>
<keyword id="KW-0808">Transferase</keyword>
<protein>
    <recommendedName>
        <fullName>UDP-glycosyltransferase 76D1</fullName>
        <ecNumber>2.4.1.-</ecNumber>
    </recommendedName>
</protein>
<comment type="function">
    <text evidence="2">Possesses low quercetin 7-O-glucosyltransferase activity in vitro.</text>
</comment>
<comment type="similarity">
    <text evidence="3">Belongs to the UDP-glycosyltransferase family.</text>
</comment>
<comment type="sequence caution" evidence="3">
    <conflict type="miscellaneous discrepancy">
        <sequence resource="EMBL" id="BX821030"/>
    </conflict>
    <text>Sequencing errors.</text>
</comment>